<reference evidence="11" key="1">
    <citation type="journal article" date="2006" name="J. Biochem.">
        <title>PbGCbeta is essential for Plasmodium ookinete motility to invade midgut cell and for successful completion of parasite life cycle in mosquitoes.</title>
        <authorList>
            <person name="Hirai M."/>
            <person name="Arai M."/>
            <person name="Kawai S."/>
            <person name="Matsuoka H."/>
        </authorList>
    </citation>
    <scope>NUCLEOTIDE SEQUENCE [GENOMIC DNA]</scope>
    <scope>FUNCTION</scope>
    <scope>DISRUPTION PHENOTYPE</scope>
</reference>
<reference evidence="13" key="2">
    <citation type="journal article" date="2014" name="BMC Biol.">
        <title>A comprehensive evaluation of rodent malaria parasite genomes and gene expression.</title>
        <authorList>
            <person name="Otto T.D."/>
            <person name="Bohme U."/>
            <person name="Jackson A.P."/>
            <person name="Hunt M."/>
            <person name="Franke-Fayard B."/>
            <person name="Hoeijmakers W.A."/>
            <person name="Religa A.A."/>
            <person name="Robertson L."/>
            <person name="Sanders M."/>
            <person name="Ogun S.A."/>
            <person name="Cunningham D."/>
            <person name="Erhart A."/>
            <person name="Billker O."/>
            <person name="Khan S.M."/>
            <person name="Stunnenberg H.G."/>
            <person name="Langhorne J."/>
            <person name="Holder A.A."/>
            <person name="Waters A.P."/>
            <person name="Newbold C.I."/>
            <person name="Pain A."/>
            <person name="Berriman M."/>
            <person name="Janse C.J."/>
        </authorList>
    </citation>
    <scope>NUCLEOTIDE SEQUENCE [LARGE SCALE GENOMIC DNA]</scope>
    <source>
        <strain evidence="13">ANKA</strain>
    </source>
</reference>
<reference evidence="10" key="3">
    <citation type="journal article" date="2009" name="PLoS Pathog.">
        <title>A cyclic GMP signalling module that regulates gliding motility in a malaria parasite.</title>
        <authorList>
            <person name="Moon R.W."/>
            <person name="Taylor C.J."/>
            <person name="Bex C."/>
            <person name="Schepers R."/>
            <person name="Goulding D."/>
            <person name="Janse C.J."/>
            <person name="Waters A.P."/>
            <person name="Baker D.A."/>
            <person name="Billker O."/>
        </authorList>
    </citation>
    <scope>FUNCTION</scope>
    <scope>DEVELOPMENTAL STAGE</scope>
    <scope>DISRUPTION PHENOTYPE</scope>
</reference>
<sequence>MKETDKIKSEVLNLMQLDGKREHINKNNKLYRKVIINPTSEDDLQKFCKNYFRIYQFSLYNFIRRLISLDAVIVYTLFMTVYIFSEISQGITKKYLFVDTAISLFLNIGILVVIESLFELKLLKDIKNANSQHYLRIVPKMSYFEKVMTKDIKVGNIIRVFQGEEFPADVVILYSKKNTNAVVDSFKIDGLYNKSIKYPVEKYKIDRDYLKMLSEINGVIKCELPNKNVFCFQGTYKLDKHPRSLHLSYENFALQSSILKGAEYIDGVVVYTGADTKKNLNIPRKIEENMTFCIKMNNVVYYLIFMYILFVLLSIIIKAIFYRKGKLLENSNDTFFTVLEDFIGLYILVLPVMLYSEKSLIYIIQSLKIERDTRMNKDENSNNTKVFNKNKNDALGTVDIIATARNGVLVNKKEILVSCTINNVLYSKKKFIISDEFLKLPSLNILDAERTNVSELLNLDERIFKDPENIFFPSRDFNNFLKILGNNTNPIYDPINGDFSKILKEIYRNYLNEEFLYKKIKLSSSVKSLLDNGYNQFLEDCESSYDCKEIIEDGLKNNEQSEKIEEFILGICACNRIIIYNEKFGDIEMKDNINEKSTSEHMNYDKDREVENIESENKYAVDSDGEENMNTIEHEDICLFNTSKNIGFHIYCYKKCLFFYNLKNICKEYYIICFHDFLRSNNYTMCILKNKKELDKGILYIRGYDFNILPYLCKNKNDINKIKKTIKIHTANYLKVILICKKNITNEDIAKYIYLKSVRSKFSFKFFDIIKTFFLYDLECIGIIGLKNDLNDGVVETFNDINNFDIRSWIFTNDSSKNTYLTALQCNLITPNSNLFIINFLNPDHSDEETVANYLFNNFLFSMENMKSRSYAIAINEMSLKNIMRSRYALKVFLCIIMRATVVLFCKLNNETKGKIISKFLSYTTPKLTVLGVGSTLNDAYLLKNTTISVCLTLNKQVNALYSISDYAMEEFKYVGELLILGRLNRFSLCRAFLWIIYLKVMIGSFYFFHNFDNFFSGSSISSILYSQTAFAIFHYSLIVAFASYEIDIPYKFIRNFPYIYQLARRKYFLNNTIIFLNIVESIFSSFISYYILRGNLFNLITHRKFTFHIFVLNFFLISEKILLFSKTWHIFFFIMTIIIVSILFIYINIYTLVDCLITGKCEFSLFDPEDSYFWISLLPILYINFIIDKFMKFVKNKIYPDITYHLSNTLKIETQEKFATNNKREEVITDKNIEKLAPVPKSYIIKEDNAYYGKSKKNKYIFDTLRKIIDIKIKYRNQQLNLEYKTYEKRNKLKLRIIILLLFIIFLITFTIQIIISKFIEKKLHSLSYLTVIYYIVAVLYLIKILIRNKTNYTYFYIIGKLLLVIGYLLEISENSVNNIINMLVTYSFTVCYIFFISFKILEGLVMCIIILSIAIWVYYHKNNNLNAMCTDFCDNPYTSLDNLEYINISCICKQQIFTFLICTLSFTLICLFMKYYEIYYLKKKFLTRYKQKVNLGKQIEILHTMLPSFLVEYLLVSDPKADGIMVGKNISGEDRGIISVIFCDIDDFQTMVSTLEPHTLVQTLDNLYLYFDKCIKYFNCIKIETVFESYLAASGLSEKKNNCVHKIKYDTKCAIKMAIAQLSAKYYISYKVLDTLSNNKDSNSIFPIESKYIYKNISLRIGIHTGKAISGVIGSVKPQYSLFGDTVNTASRMKSTSLKDHIHVSYDTYKYLKDDKTLVWKERSIFIKGKGEMKTYLLVDILDNSKKDHTKALEESTSSIFRSNDEIVNKSELITKEKEFDKIEMPDKSEIIDETKKIFKKSEKPSTKKKKIKKENAKEKNINIKMKEMGEILNNYDKEKVYNCNKSDDGSNSIGQNDFLYSTKNYNYKKSKYLDLERLSTNKSFRRNVLAYNFESPINLPPKIGDNTKRNYDSDNFFTSPYIIDKNEKDEIRDTTNKALYIKKSKNIINRMREDSIDFKDEFSKENDKIKEYIKERITYRQKVTPNYFNFNNMSKYSNAFKKKKKKKKDIQKKYTYRQKTSFYNFLNKNDIINYNYSSEFEYFIDPKMKNKKPINFNNLFAKIYKKKLSLLNIKNEPINIKKKNIKNKSRDRIIFSSRRDEEHDDNQKMNKKLFSRTYAQKAEQTSHENIFTEMINDNFLKKEDKEQCEIRNENRCPTVFLIKRNKTTININKNRVLKRIFKDIITRKKIKRNRILKNKKLNYVNKNDNLGKKYEILNNICLVHKRAMTFVQYNTEDEEKKRTKRFHKNDEIFGSDMNISRNLNGSNSNIQNINRRSKNKAEDDLFIRNKVNLNNIKNNINLRKNIYKTDERGMQYNDLKGYDKKKNTEENNEDKEKKIEYDSNENIKNGFPKNEDKMIMKKRMISKRISFYSLKEYEKGDSFKSYDNSSCGIKSKKTNSIISDEEMNEYFNYNTEFNSNRNKNKQNKEFSLASKVNNIFKNIFKKNYISDKLKSGKYNTMSNSKSGQTNITTDNKKSQIKKNGDVNKANTNVSNKNSDFVTNFDNYNKNILKKLTSTLQINRKTSYFNRFYYKFKDEELEEEYTREYYQEIINIDLTKKLIIIFVISELILSLCNVIELSYYENKETPNDFIVIIWLIRSIYLFTITFIWLLLKTKLKEYKDNSSKMMWTTFILNIFLSSWGIIMIDLACIHYSNLVGNSRERSIFFMKDATELIISMQLIFVKNMLFKHKFFFFVFFFVFLMYSFFKLFVIHVCELRICCSILLILSINILYFWYSEYLDRTQYIIKRKRNRMERTSHDFLTRILPRQVLEEYQNDNLQLTYKHEKIAFLFADIVGFTKWSKTAAPKNVLKLLQKLISKIDKDTIKLGLYKLFTIGDAYVATSQPNASITDQTEAADGIISIFKLAKLILHNINTIKIQFNKHDFNMRIGLHYGSCVGGIIGSVRIRYDMWGLDVLIANHIESNGIPGEIVCSEQFKNFFLENEPHAKLNFWHYKTISINDKDIKIYVVEDKNYEEDYDPKIINYETLLKLREQNKVKG</sequence>
<accession>A0A509APX1</accession>
<accession>A0MJN0</accession>
<proteinExistence type="evidence at transcript level"/>
<comment type="function">
    <text evidence="2 7 8">Catalyzes the synthesis of the second messenger cGMP from GTP (By similarity). Probably by regulating cGMP production, required for ookinete gliding motility, which is necessary for the ookinete to traverse the midgut epithelium of the mosquito (PubMed:17030505, PubMed:19779564).</text>
</comment>
<comment type="catalytic activity">
    <reaction evidence="2">
        <text>GTP = 3',5'-cyclic GMP + diphosphate</text>
        <dbReference type="Rhea" id="RHEA:13665"/>
        <dbReference type="ChEBI" id="CHEBI:33019"/>
        <dbReference type="ChEBI" id="CHEBI:37565"/>
        <dbReference type="ChEBI" id="CHEBI:57746"/>
        <dbReference type="EC" id="4.6.1.2"/>
    </reaction>
</comment>
<comment type="cofactor">
    <cofactor evidence="2">
        <name>Mg(2+)</name>
        <dbReference type="ChEBI" id="CHEBI:18420"/>
    </cofactor>
    <cofactor evidence="2">
        <name>Mn(2+)</name>
        <dbReference type="ChEBI" id="CHEBI:29035"/>
    </cofactor>
    <text evidence="1 2">Binds 2 magnesium ions per subunit (By similarity). Is also active with manganese (in vitro) (By similarity).</text>
</comment>
<comment type="subcellular location">
    <subcellularLocation>
        <location evidence="3">Membrane</location>
        <topology evidence="3">Multi-pass membrane protein</topology>
    </subcellularLocation>
</comment>
<comment type="developmental stage">
    <text evidence="8">During the blood stage, specifically expressed in gametocytes.</text>
</comment>
<comment type="domain">
    <text evidence="2">The N-terminus contains a P-type ATPase-like domain which is required for guanylate cyclase activity.</text>
</comment>
<comment type="disruption phenotype">
    <text evidence="7 8">In the mosquito, ookinetes have severe defect in motility and their ability to traverse the midgut epithelium is impaired resulting in complete developmental arrest (PubMed:17030505, PubMed:19779564). Normal development of gametocytes, normal exflagellation and fertilization, and normal development of zygote into ookinete (PubMed:19779564).</text>
</comment>
<comment type="similarity">
    <text evidence="10">In the N-terminal section; belongs to the cation transport ATPase (P-type) (TC 3.A.3) family. Type IV subfamily.</text>
</comment>
<comment type="similarity">
    <text evidence="10">In the C-terminal section; belongs to the adenylyl cyclase class-4/guanylyl cyclase family.</text>
</comment>
<comment type="sequence caution" evidence="10">
    <conflict type="erroneous gene model prediction">
        <sequence resource="EMBL-CDS" id="ABJ90483"/>
    </conflict>
</comment>
<dbReference type="EC" id="4.6.1.2" evidence="2"/>
<dbReference type="EMBL" id="DQ904399">
    <property type="protein sequence ID" value="ABJ90483.1"/>
    <property type="status" value="ALT_SEQ"/>
    <property type="molecule type" value="Genomic_DNA"/>
</dbReference>
<dbReference type="EMBL" id="LK023126">
    <property type="protein sequence ID" value="VUC56788.1"/>
    <property type="molecule type" value="Genomic_DNA"/>
</dbReference>
<dbReference type="FunCoup" id="A0A509APX1">
    <property type="interactions" value="29"/>
</dbReference>
<dbReference type="STRING" id="5823.A0A509APX1"/>
<dbReference type="GlyCosmos" id="A0A509APX1">
    <property type="glycosylation" value="1 site, No reported glycans"/>
</dbReference>
<dbReference type="VEuPathDB" id="PlasmoDB:PBANKA_1136700"/>
<dbReference type="InParanoid" id="A0A509APX1"/>
<dbReference type="OMA" id="NNNKYHH"/>
<dbReference type="Proteomes" id="UP000074855">
    <property type="component" value="Chromosome 11"/>
</dbReference>
<dbReference type="GO" id="GO:0005886">
    <property type="term" value="C:plasma membrane"/>
    <property type="evidence" value="ECO:0007669"/>
    <property type="project" value="TreeGrafter"/>
</dbReference>
<dbReference type="GO" id="GO:0140326">
    <property type="term" value="F:ATPase-coupled intramembrane lipid transporter activity"/>
    <property type="evidence" value="ECO:0007669"/>
    <property type="project" value="TreeGrafter"/>
</dbReference>
<dbReference type="GO" id="GO:0004383">
    <property type="term" value="F:guanylate cyclase activity"/>
    <property type="evidence" value="ECO:0007669"/>
    <property type="project" value="UniProtKB-EC"/>
</dbReference>
<dbReference type="GO" id="GO:0046872">
    <property type="term" value="F:metal ion binding"/>
    <property type="evidence" value="ECO:0007669"/>
    <property type="project" value="UniProtKB-KW"/>
</dbReference>
<dbReference type="GO" id="GO:0035556">
    <property type="term" value="P:intracellular signal transduction"/>
    <property type="evidence" value="ECO:0007669"/>
    <property type="project" value="InterPro"/>
</dbReference>
<dbReference type="GO" id="GO:0045332">
    <property type="term" value="P:phospholipid translocation"/>
    <property type="evidence" value="ECO:0007669"/>
    <property type="project" value="TreeGrafter"/>
</dbReference>
<dbReference type="GO" id="GO:2000147">
    <property type="term" value="P:positive regulation of cell motility"/>
    <property type="evidence" value="ECO:0000315"/>
    <property type="project" value="UniProtKB"/>
</dbReference>
<dbReference type="CDD" id="cd07302">
    <property type="entry name" value="CHD"/>
    <property type="match status" value="2"/>
</dbReference>
<dbReference type="Gene3D" id="2.70.150.10">
    <property type="entry name" value="Calcium-transporting ATPase, cytoplasmic transduction domain A"/>
    <property type="match status" value="1"/>
</dbReference>
<dbReference type="Gene3D" id="3.40.50.1000">
    <property type="entry name" value="HAD superfamily/HAD-like"/>
    <property type="match status" value="1"/>
</dbReference>
<dbReference type="Gene3D" id="3.30.70.1230">
    <property type="entry name" value="Nucleotide cyclase"/>
    <property type="match status" value="2"/>
</dbReference>
<dbReference type="InterPro" id="IPR001054">
    <property type="entry name" value="A/G_cyclase"/>
</dbReference>
<dbReference type="InterPro" id="IPR023298">
    <property type="entry name" value="ATPase_P-typ_TM_dom_sf"/>
</dbReference>
<dbReference type="InterPro" id="IPR008250">
    <property type="entry name" value="ATPase_P-typ_transduc_dom_A_sf"/>
</dbReference>
<dbReference type="InterPro" id="IPR036412">
    <property type="entry name" value="HAD-like_sf"/>
</dbReference>
<dbReference type="InterPro" id="IPR023214">
    <property type="entry name" value="HAD_sf"/>
</dbReference>
<dbReference type="InterPro" id="IPR029787">
    <property type="entry name" value="Nucleotide_cyclase"/>
</dbReference>
<dbReference type="InterPro" id="IPR032630">
    <property type="entry name" value="P_typ_ATPase_c"/>
</dbReference>
<dbReference type="PANTHER" id="PTHR24092">
    <property type="entry name" value="PROBABLE PHOSPHOLIPID-TRANSPORTING ATPASE"/>
    <property type="match status" value="1"/>
</dbReference>
<dbReference type="Pfam" id="PF00211">
    <property type="entry name" value="Guanylate_cyc"/>
    <property type="match status" value="2"/>
</dbReference>
<dbReference type="Pfam" id="PF16212">
    <property type="entry name" value="PhoLip_ATPase_C"/>
    <property type="match status" value="1"/>
</dbReference>
<dbReference type="SMART" id="SM00044">
    <property type="entry name" value="CYCc"/>
    <property type="match status" value="2"/>
</dbReference>
<dbReference type="SUPFAM" id="SSF81653">
    <property type="entry name" value="Calcium ATPase, transduction domain A"/>
    <property type="match status" value="1"/>
</dbReference>
<dbReference type="SUPFAM" id="SSF81665">
    <property type="entry name" value="Calcium ATPase, transmembrane domain M"/>
    <property type="match status" value="1"/>
</dbReference>
<dbReference type="SUPFAM" id="SSF56784">
    <property type="entry name" value="HAD-like"/>
    <property type="match status" value="1"/>
</dbReference>
<dbReference type="SUPFAM" id="SSF55073">
    <property type="entry name" value="Nucleotide cyclase"/>
    <property type="match status" value="2"/>
</dbReference>
<dbReference type="PROSITE" id="PS50125">
    <property type="entry name" value="GUANYLATE_CYCLASE_2"/>
    <property type="match status" value="2"/>
</dbReference>
<feature type="chain" id="PRO_0000452807" description="Guanylate cyclase beta">
    <location>
        <begin position="1"/>
        <end position="3004"/>
    </location>
</feature>
<feature type="topological domain" description="Cytoplasmic" evidence="10">
    <location>
        <begin position="1"/>
        <end position="66"/>
    </location>
</feature>
<feature type="transmembrane region" description="Helical" evidence="3">
    <location>
        <begin position="67"/>
        <end position="87"/>
    </location>
</feature>
<feature type="topological domain" description="Extracellular" evidence="10">
    <location>
        <begin position="88"/>
        <end position="94"/>
    </location>
</feature>
<feature type="transmembrane region" description="Helical" evidence="3">
    <location>
        <begin position="95"/>
        <end position="115"/>
    </location>
</feature>
<feature type="topological domain" description="Cytoplasmic" evidence="10">
    <location>
        <begin position="116"/>
        <end position="300"/>
    </location>
</feature>
<feature type="transmembrane region" description="Helical" evidence="3">
    <location>
        <begin position="301"/>
        <end position="321"/>
    </location>
</feature>
<feature type="topological domain" description="Extracellular" evidence="10">
    <location>
        <begin position="322"/>
        <end position="334"/>
    </location>
</feature>
<feature type="transmembrane region" description="Helical" evidence="3">
    <location>
        <begin position="335"/>
        <end position="355"/>
    </location>
</feature>
<feature type="topological domain" description="Cytoplasmic" evidence="10">
    <location>
        <begin position="356"/>
        <end position="991"/>
    </location>
</feature>
<feature type="transmembrane region" description="Helical" evidence="3">
    <location>
        <begin position="992"/>
        <end position="1012"/>
    </location>
</feature>
<feature type="topological domain" description="Extracellular" evidence="10">
    <location>
        <begin position="1013"/>
        <end position="1022"/>
    </location>
</feature>
<feature type="transmembrane region" description="Helical" evidence="3">
    <location>
        <begin position="1023"/>
        <end position="1043"/>
    </location>
</feature>
<feature type="topological domain" description="Cytoplasmic" evidence="10">
    <location>
        <begin position="1044"/>
        <end position="1072"/>
    </location>
</feature>
<feature type="transmembrane region" description="Helical" evidence="3">
    <location>
        <begin position="1073"/>
        <end position="1093"/>
    </location>
</feature>
<feature type="topological domain" description="Extracellular" evidence="10">
    <location>
        <begin position="1094"/>
        <end position="1105"/>
    </location>
</feature>
<feature type="transmembrane region" description="Helical" evidence="3">
    <location>
        <begin position="1106"/>
        <end position="1126"/>
    </location>
</feature>
<feature type="topological domain" description="Cytoplasmic" evidence="10">
    <location>
        <begin position="1127"/>
        <end position="1130"/>
    </location>
</feature>
<feature type="transmembrane region" description="Helical" evidence="3">
    <location>
        <begin position="1131"/>
        <end position="1151"/>
    </location>
</feature>
<feature type="topological domain" description="Extracellular" evidence="10">
    <location>
        <begin position="1152"/>
        <end position="1171"/>
    </location>
</feature>
<feature type="transmembrane region" description="Helical" evidence="3">
    <location>
        <begin position="1172"/>
        <end position="1192"/>
    </location>
</feature>
<feature type="topological domain" description="Cytoplasmic" evidence="10">
    <location>
        <begin position="1193"/>
        <end position="1297"/>
    </location>
</feature>
<feature type="transmembrane region" description="Helical" evidence="3">
    <location>
        <begin position="1298"/>
        <end position="1318"/>
    </location>
</feature>
<feature type="topological domain" description="Extracellular" evidence="10">
    <location>
        <begin position="1319"/>
        <end position="1327"/>
    </location>
</feature>
<feature type="transmembrane region" description="Helical" evidence="3">
    <location>
        <begin position="1328"/>
        <end position="1348"/>
    </location>
</feature>
<feature type="topological domain" description="Cytoplasmic" evidence="10">
    <location>
        <begin position="1349"/>
        <end position="1353"/>
    </location>
</feature>
<feature type="transmembrane region" description="Helical" evidence="3">
    <location>
        <begin position="1354"/>
        <end position="1374"/>
    </location>
</feature>
<feature type="topological domain" description="Extracellular" evidence="10">
    <location>
        <begin position="1375"/>
        <end position="1394"/>
    </location>
</feature>
<feature type="transmembrane region" description="Helical" evidence="3">
    <location>
        <begin position="1395"/>
        <end position="1415"/>
    </location>
</feature>
<feature type="topological domain" description="Cytoplasmic" evidence="10">
    <location>
        <begin position="1416"/>
        <end position="1457"/>
    </location>
</feature>
<feature type="transmembrane region" description="Helical" evidence="3">
    <location>
        <begin position="1458"/>
        <end position="1478"/>
    </location>
</feature>
<feature type="topological domain" description="Extracellular" evidence="10">
    <location>
        <begin position="1479"/>
        <end position="1500"/>
    </location>
</feature>
<feature type="transmembrane region" description="Helical" evidence="3">
    <location>
        <begin position="1501"/>
        <end position="1521"/>
    </location>
</feature>
<feature type="topological domain" description="Cytoplasmic" evidence="10">
    <location>
        <begin position="1522"/>
        <end position="2563"/>
    </location>
</feature>
<feature type="transmembrane region" description="Helical" evidence="3">
    <location>
        <begin position="2564"/>
        <end position="2584"/>
    </location>
</feature>
<feature type="topological domain" description="Extracellular" evidence="10">
    <location>
        <begin position="2585"/>
        <end position="2594"/>
    </location>
</feature>
<feature type="transmembrane region" description="Helical" evidence="3">
    <location>
        <begin position="2595"/>
        <end position="2615"/>
    </location>
</feature>
<feature type="topological domain" description="Cytoplasmic" evidence="10">
    <location>
        <begin position="2616"/>
        <end position="2634"/>
    </location>
</feature>
<feature type="transmembrane region" description="Helical" evidence="3">
    <location>
        <begin position="2635"/>
        <end position="2655"/>
    </location>
</feature>
<feature type="topological domain" description="Extracellular" evidence="10">
    <location>
        <begin position="2656"/>
        <end position="2667"/>
    </location>
</feature>
<feature type="transmembrane region" description="Helical" evidence="10">
    <location>
        <begin position="2668"/>
        <end position="2688"/>
    </location>
</feature>
<feature type="topological domain" description="Cytoplasmic" evidence="10">
    <location>
        <begin position="2689"/>
        <end position="2695"/>
    </location>
</feature>
<feature type="transmembrane region" description="Helical" evidence="3">
    <location>
        <begin position="2696"/>
        <end position="2716"/>
    </location>
</feature>
<feature type="topological domain" description="Extracellular" evidence="10">
    <location>
        <begin position="2717"/>
        <end position="2722"/>
    </location>
</feature>
<feature type="transmembrane region" description="Helical" evidence="3">
    <location>
        <begin position="2723"/>
        <end position="2743"/>
    </location>
</feature>
<feature type="topological domain" description="Cytoplasmic" evidence="10">
    <location>
        <begin position="2744"/>
        <end position="3004"/>
    </location>
</feature>
<feature type="domain" description="Guanylate cyclase 1" evidence="4">
    <location>
        <begin position="1541"/>
        <end position="1696"/>
    </location>
</feature>
<feature type="domain" description="Guanylate cyclase 2" evidence="4">
    <location>
        <begin position="2793"/>
        <end position="2927"/>
    </location>
</feature>
<feature type="region of interest" description="Disordered" evidence="6">
    <location>
        <begin position="2463"/>
        <end position="2491"/>
    </location>
</feature>
<feature type="compositionally biased region" description="Polar residues" evidence="6">
    <location>
        <begin position="2463"/>
        <end position="2476"/>
    </location>
</feature>
<feature type="compositionally biased region" description="Basic and acidic residues" evidence="6">
    <location>
        <begin position="2477"/>
        <end position="2488"/>
    </location>
</feature>
<feature type="binding site" evidence="4">
    <location>
        <position position="2798"/>
    </location>
    <ligand>
        <name>Mg(2+)</name>
        <dbReference type="ChEBI" id="CHEBI:18420"/>
        <label>1</label>
    </ligand>
</feature>
<feature type="binding site" evidence="4">
    <location>
        <position position="2798"/>
    </location>
    <ligand>
        <name>Mg(2+)</name>
        <dbReference type="ChEBI" id="CHEBI:18420"/>
        <label>2</label>
    </ligand>
</feature>
<feature type="binding site" evidence="4">
    <location>
        <position position="2799"/>
    </location>
    <ligand>
        <name>Mg(2+)</name>
        <dbReference type="ChEBI" id="CHEBI:18420"/>
        <label>2</label>
    </ligand>
</feature>
<feature type="binding site" evidence="4">
    <location>
        <position position="2842"/>
    </location>
    <ligand>
        <name>Mg(2+)</name>
        <dbReference type="ChEBI" id="CHEBI:18420"/>
        <label>1</label>
    </ligand>
</feature>
<feature type="binding site" evidence="4">
    <location>
        <position position="2842"/>
    </location>
    <ligand>
        <name>Mg(2+)</name>
        <dbReference type="ChEBI" id="CHEBI:18420"/>
        <label>2</label>
    </ligand>
</feature>
<feature type="glycosylation site" description="N-linked (GlcNAc...) asparagine" evidence="5">
    <location>
        <position position="332"/>
    </location>
</feature>
<evidence type="ECO:0000250" key="1">
    <source>
        <dbReference type="UniProtKB" id="P30803"/>
    </source>
</evidence>
<evidence type="ECO:0000250" key="2">
    <source>
        <dbReference type="UniProtKB" id="Q8IDA0"/>
    </source>
</evidence>
<evidence type="ECO:0000255" key="3"/>
<evidence type="ECO:0000255" key="4">
    <source>
        <dbReference type="PROSITE-ProRule" id="PRU00099"/>
    </source>
</evidence>
<evidence type="ECO:0000255" key="5">
    <source>
        <dbReference type="PROSITE-ProRule" id="PRU00498"/>
    </source>
</evidence>
<evidence type="ECO:0000256" key="6">
    <source>
        <dbReference type="SAM" id="MobiDB-lite"/>
    </source>
</evidence>
<evidence type="ECO:0000269" key="7">
    <source>
    </source>
</evidence>
<evidence type="ECO:0000269" key="8">
    <source>
    </source>
</evidence>
<evidence type="ECO:0000303" key="9">
    <source>
    </source>
</evidence>
<evidence type="ECO:0000305" key="10"/>
<evidence type="ECO:0000312" key="11">
    <source>
        <dbReference type="EMBL" id="ABJ90483.1"/>
    </source>
</evidence>
<evidence type="ECO:0000312" key="12">
    <source>
        <dbReference type="EMBL" id="VUC56788.1"/>
    </source>
</evidence>
<evidence type="ECO:0000312" key="13">
    <source>
        <dbReference type="Proteomes" id="UP000074855"/>
    </source>
</evidence>
<gene>
    <name evidence="9" type="primary">GCbeta</name>
    <name evidence="12" type="ORF">PBANKA_1136700</name>
</gene>
<organism evidence="13">
    <name type="scientific">Plasmodium berghei (strain Anka)</name>
    <dbReference type="NCBI Taxonomy" id="5823"/>
    <lineage>
        <taxon>Eukaryota</taxon>
        <taxon>Sar</taxon>
        <taxon>Alveolata</taxon>
        <taxon>Apicomplexa</taxon>
        <taxon>Aconoidasida</taxon>
        <taxon>Haemosporida</taxon>
        <taxon>Plasmodiidae</taxon>
        <taxon>Plasmodium</taxon>
        <taxon>Plasmodium (Vinckeia)</taxon>
    </lineage>
</organism>
<name>GCYB_PLABA</name>
<keyword id="KW-0141">cGMP biosynthesis</keyword>
<keyword id="KW-0325">Glycoprotein</keyword>
<keyword id="KW-0456">Lyase</keyword>
<keyword id="KW-0460">Magnesium</keyword>
<keyword id="KW-0472">Membrane</keyword>
<keyword id="KW-0479">Metal-binding</keyword>
<keyword id="KW-1185">Reference proteome</keyword>
<keyword id="KW-0812">Transmembrane</keyword>
<keyword id="KW-1133">Transmembrane helix</keyword>
<protein>
    <recommendedName>
        <fullName evidence="9">Guanylate cyclase beta</fullName>
        <shortName evidence="9">PfGCbeta</shortName>
        <ecNumber evidence="2">4.6.1.2</ecNumber>
    </recommendedName>
    <alternativeName>
        <fullName evidence="10">Guanylyl cyclase beta</fullName>
    </alternativeName>
</protein>